<organism>
    <name type="scientific">Sus scrofa</name>
    <name type="common">Pig</name>
    <dbReference type="NCBI Taxonomy" id="9823"/>
    <lineage>
        <taxon>Eukaryota</taxon>
        <taxon>Metazoa</taxon>
        <taxon>Chordata</taxon>
        <taxon>Craniata</taxon>
        <taxon>Vertebrata</taxon>
        <taxon>Euteleostomi</taxon>
        <taxon>Mammalia</taxon>
        <taxon>Eutheria</taxon>
        <taxon>Laurasiatheria</taxon>
        <taxon>Artiodactyla</taxon>
        <taxon>Suina</taxon>
        <taxon>Suidae</taxon>
        <taxon>Sus</taxon>
    </lineage>
</organism>
<feature type="signal peptide" evidence="8">
    <location>
        <begin position="1"/>
        <end position="17"/>
    </location>
</feature>
<feature type="chain" id="PRO_0000004175" description="Calreticulin">
    <location>
        <begin position="18"/>
        <end position="417"/>
    </location>
</feature>
<feature type="repeat" description="1-1">
    <location>
        <begin position="191"/>
        <end position="202"/>
    </location>
</feature>
<feature type="repeat" description="1-2">
    <location>
        <begin position="210"/>
        <end position="221"/>
    </location>
</feature>
<feature type="repeat" description="1-3">
    <location>
        <begin position="227"/>
        <end position="238"/>
    </location>
</feature>
<feature type="repeat" description="1-4">
    <location>
        <begin position="244"/>
        <end position="255"/>
    </location>
</feature>
<feature type="repeat" description="2-1">
    <location>
        <begin position="259"/>
        <end position="269"/>
    </location>
</feature>
<feature type="repeat" description="2-2">
    <location>
        <begin position="273"/>
        <end position="283"/>
    </location>
</feature>
<feature type="repeat" description="2-3">
    <location>
        <begin position="287"/>
        <end position="297"/>
    </location>
</feature>
<feature type="region of interest" description="N-domain">
    <location>
        <begin position="18"/>
        <end position="197"/>
    </location>
</feature>
<feature type="region of interest" description="4 X approximate repeats">
    <location>
        <begin position="191"/>
        <end position="255"/>
    </location>
</feature>
<feature type="region of interest" description="Disordered" evidence="7">
    <location>
        <begin position="193"/>
        <end position="277"/>
    </location>
</feature>
<feature type="region of interest" description="P-domain">
    <location>
        <begin position="198"/>
        <end position="308"/>
    </location>
</feature>
<feature type="region of interest" description="Interaction with PPIB" evidence="1">
    <location>
        <begin position="237"/>
        <end position="270"/>
    </location>
</feature>
<feature type="region of interest" description="3 X approximate repeats">
    <location>
        <begin position="259"/>
        <end position="297"/>
    </location>
</feature>
<feature type="region of interest" description="C-domain">
    <location>
        <begin position="309"/>
        <end position="417"/>
    </location>
</feature>
<feature type="region of interest" description="Disordered" evidence="7">
    <location>
        <begin position="350"/>
        <end position="417"/>
    </location>
</feature>
<feature type="short sequence motif" description="Prevents secretion from ER" evidence="6">
    <location>
        <begin position="414"/>
        <end position="417"/>
    </location>
</feature>
<feature type="compositionally biased region" description="Basic and acidic residues" evidence="7">
    <location>
        <begin position="207"/>
        <end position="251"/>
    </location>
</feature>
<feature type="compositionally biased region" description="Acidic residues" evidence="7">
    <location>
        <begin position="252"/>
        <end position="261"/>
    </location>
</feature>
<feature type="compositionally biased region" description="Basic and acidic residues" evidence="7">
    <location>
        <begin position="352"/>
        <end position="379"/>
    </location>
</feature>
<feature type="compositionally biased region" description="Acidic residues" evidence="7">
    <location>
        <begin position="380"/>
        <end position="408"/>
    </location>
</feature>
<feature type="binding site" evidence="1">
    <location>
        <position position="26"/>
    </location>
    <ligand>
        <name>Ca(2+)</name>
        <dbReference type="ChEBI" id="CHEBI:29108"/>
    </ligand>
</feature>
<feature type="binding site" evidence="1">
    <location>
        <position position="62"/>
    </location>
    <ligand>
        <name>Ca(2+)</name>
        <dbReference type="ChEBI" id="CHEBI:29108"/>
    </ligand>
</feature>
<feature type="binding site" evidence="1">
    <location>
        <position position="64"/>
    </location>
    <ligand>
        <name>Ca(2+)</name>
        <dbReference type="ChEBI" id="CHEBI:29108"/>
    </ligand>
</feature>
<feature type="binding site" evidence="2">
    <location>
        <position position="109"/>
    </location>
    <ligand>
        <name>an alpha-D-glucoside</name>
        <dbReference type="ChEBI" id="CHEBI:22390"/>
    </ligand>
</feature>
<feature type="binding site" evidence="2">
    <location>
        <position position="111"/>
    </location>
    <ligand>
        <name>an alpha-D-glucoside</name>
        <dbReference type="ChEBI" id="CHEBI:22390"/>
    </ligand>
</feature>
<feature type="binding site" evidence="2">
    <location>
        <position position="128"/>
    </location>
    <ligand>
        <name>an alpha-D-glucoside</name>
        <dbReference type="ChEBI" id="CHEBI:22390"/>
    </ligand>
</feature>
<feature type="binding site" evidence="2">
    <location>
        <position position="135"/>
    </location>
    <ligand>
        <name>an alpha-D-glucoside</name>
        <dbReference type="ChEBI" id="CHEBI:22390"/>
    </ligand>
</feature>
<feature type="binding site" evidence="2">
    <location>
        <position position="317"/>
    </location>
    <ligand>
        <name>an alpha-D-glucoside</name>
        <dbReference type="ChEBI" id="CHEBI:22390"/>
    </ligand>
</feature>
<feature type="binding site" evidence="1">
    <location>
        <position position="328"/>
    </location>
    <ligand>
        <name>Ca(2+)</name>
        <dbReference type="ChEBI" id="CHEBI:29108"/>
    </ligand>
</feature>
<feature type="modified residue" description="N6-(2-hydroxyisobutyryl)lysine" evidence="4">
    <location>
        <position position="64"/>
    </location>
</feature>
<feature type="modified residue" description="N6-acetyllysine" evidence="4">
    <location>
        <position position="159"/>
    </location>
</feature>
<feature type="modified residue" description="N6-acetyllysine" evidence="4">
    <location>
        <position position="209"/>
    </location>
</feature>
<feature type="disulfide bond" evidence="1">
    <location>
        <begin position="137"/>
        <end position="163"/>
    </location>
</feature>
<feature type="sequence conflict" description="In Ref. 3; CAA23142." evidence="10" ref="3">
    <original>A</original>
    <variation>V</variation>
    <location>
        <position position="15"/>
    </location>
</feature>
<reference key="1">
    <citation type="journal article" date="2010" name="Mol. Reprod. Dev.">
        <title>Involvement of ER-calreticulin-Ca2+ signaling in the regulation of porcine oocyte meiotic maturation and maternal gene expression.</title>
        <authorList>
            <person name="Zhang D.X."/>
            <person name="Li X.P."/>
            <person name="Sun S.C."/>
            <person name="Shen X.H."/>
            <person name="Cui X.S."/>
            <person name="Kim N.H."/>
        </authorList>
    </citation>
    <scope>NUCLEOTIDE SEQUENCE [MRNA]</scope>
    <scope>FUNCTION</scope>
    <scope>SUBCELLULAR LOCATION</scope>
    <scope>TISSUE SPECIFICITY</scope>
    <scope>DEVELOPMENTAL STAGE</scope>
    <source>
        <tissue>Oocyte</tissue>
    </source>
</reference>
<reference key="2">
    <citation type="submission" date="2009-11" db="EMBL/GenBank/DDBJ databases">
        <authorList>
            <consortium name="Porcine genome sequencing project"/>
        </authorList>
    </citation>
    <scope>NUCLEOTIDE SEQUENCE [LARGE SCALE GENOMIC DNA]</scope>
</reference>
<reference key="3">
    <citation type="journal article" date="1996" name="Mamm. Genome">
        <title>Evaluation and characterization of a porcine small intestine cDNA library: analysis of 839 clones.</title>
        <authorList>
            <person name="Winteroe A.K."/>
            <person name="Fredholm M."/>
            <person name="Davies W."/>
        </authorList>
    </citation>
    <scope>NUCLEOTIDE SEQUENCE [LARGE SCALE MRNA] OF 1-105</scope>
    <source>
        <tissue>Small intestine</tissue>
    </source>
</reference>
<reference key="4">
    <citation type="journal article" date="1991" name="J. Biol. Chem.">
        <title>Calreticulin, and not calsequestrin, is the major calcium binding protein of smooth muscle sarcoplasmic reticulum and liver endoplasmic reticulum.</title>
        <authorList>
            <person name="Milner R.E."/>
            <person name="Baksh S."/>
            <person name="Shemanko C."/>
            <person name="Carpenter M.R."/>
            <person name="Smillie L."/>
            <person name="Vance J.E."/>
            <person name="Opas M."/>
            <person name="Michalak M."/>
        </authorList>
    </citation>
    <scope>PROTEIN SEQUENCE OF 18-32</scope>
    <scope>SUBCELLULAR LOCATION</scope>
    <source>
        <tissue>Uterus</tissue>
    </source>
</reference>
<dbReference type="EMBL" id="GQ984146">
    <property type="protein sequence ID" value="ADD52600.1"/>
    <property type="molecule type" value="mRNA"/>
</dbReference>
<dbReference type="EMBL" id="CU463133">
    <property type="status" value="NOT_ANNOTATED_CDS"/>
    <property type="molecule type" value="Genomic_DNA"/>
</dbReference>
<dbReference type="EMBL" id="F14591">
    <property type="protein sequence ID" value="CAA23142.1"/>
    <property type="molecule type" value="mRNA"/>
</dbReference>
<dbReference type="PIR" id="B33208">
    <property type="entry name" value="B33208"/>
</dbReference>
<dbReference type="RefSeq" id="NP_001167604.1">
    <property type="nucleotide sequence ID" value="NM_001174133.1"/>
</dbReference>
<dbReference type="BMRB" id="P28491"/>
<dbReference type="SMR" id="P28491"/>
<dbReference type="FunCoup" id="P28491">
    <property type="interactions" value="2384"/>
</dbReference>
<dbReference type="STRING" id="9823.ENSSSCP00000014615"/>
<dbReference type="PaxDb" id="9823-ENSSSCP00000014615"/>
<dbReference type="PeptideAtlas" id="P28491"/>
<dbReference type="Ensembl" id="ENSSSCT00000015020.5">
    <property type="protein sequence ID" value="ENSSSCP00000014615.2"/>
    <property type="gene ID" value="ENSSSCG00000013746.5"/>
</dbReference>
<dbReference type="Ensembl" id="ENSSSCT00015056716.1">
    <property type="protein sequence ID" value="ENSSSCP00015022723.1"/>
    <property type="gene ID" value="ENSSSCG00015041073.1"/>
</dbReference>
<dbReference type="Ensembl" id="ENSSSCT00025083589.1">
    <property type="protein sequence ID" value="ENSSSCP00025036365.1"/>
    <property type="gene ID" value="ENSSSCG00025060946.1"/>
</dbReference>
<dbReference type="Ensembl" id="ENSSSCT00030011909.1">
    <property type="protein sequence ID" value="ENSSSCP00030005345.1"/>
    <property type="gene ID" value="ENSSSCG00030008732.1"/>
</dbReference>
<dbReference type="Ensembl" id="ENSSSCT00035058366.1">
    <property type="protein sequence ID" value="ENSSSCP00035023460.1"/>
    <property type="gene ID" value="ENSSSCG00035043864.1"/>
</dbReference>
<dbReference type="Ensembl" id="ENSSSCT00040018461.1">
    <property type="protein sequence ID" value="ENSSSCP00040007553.1"/>
    <property type="gene ID" value="ENSSSCG00040013848.1"/>
</dbReference>
<dbReference type="Ensembl" id="ENSSSCT00045041455.1">
    <property type="protein sequence ID" value="ENSSSCP00045028773.1"/>
    <property type="gene ID" value="ENSSSCG00045024306.1"/>
</dbReference>
<dbReference type="Ensembl" id="ENSSSCT00050081446.1">
    <property type="protein sequence ID" value="ENSSSCP00050034963.1"/>
    <property type="gene ID" value="ENSSSCG00050059786.1"/>
</dbReference>
<dbReference type="Ensembl" id="ENSSSCT00055044054.1">
    <property type="protein sequence ID" value="ENSSSCP00055035089.1"/>
    <property type="gene ID" value="ENSSSCG00055022230.1"/>
</dbReference>
<dbReference type="Ensembl" id="ENSSSCT00060018212.1">
    <property type="protein sequence ID" value="ENSSSCP00060007287.1"/>
    <property type="gene ID" value="ENSSSCG00060013787.1"/>
</dbReference>
<dbReference type="Ensembl" id="ENSSSCT00065025731.1">
    <property type="protein sequence ID" value="ENSSSCP00065010535.1"/>
    <property type="gene ID" value="ENSSSCG00065019328.1"/>
</dbReference>
<dbReference type="Ensembl" id="ENSSSCT00070015454.1">
    <property type="protein sequence ID" value="ENSSSCP00070012779.1"/>
    <property type="gene ID" value="ENSSSCG00070008005.1"/>
</dbReference>
<dbReference type="Ensembl" id="ENSSSCT00115010385">
    <property type="protein sequence ID" value="ENSSSCP00115009780"/>
    <property type="gene ID" value="ENSSSCG00115005981"/>
</dbReference>
<dbReference type="GeneID" id="100381266"/>
<dbReference type="KEGG" id="ssc:100381266"/>
<dbReference type="CTD" id="811"/>
<dbReference type="VGNC" id="VGNC:86149">
    <property type="gene designation" value="CALR"/>
</dbReference>
<dbReference type="eggNOG" id="KOG0674">
    <property type="taxonomic scope" value="Eukaryota"/>
</dbReference>
<dbReference type="GeneTree" id="ENSGT00950000182915"/>
<dbReference type="HOGENOM" id="CLU_018224_0_2_1"/>
<dbReference type="InParanoid" id="P28491"/>
<dbReference type="OMA" id="KRDEICA"/>
<dbReference type="OrthoDB" id="1938156at2759"/>
<dbReference type="TreeFam" id="TF338438"/>
<dbReference type="Reactome" id="R-SSC-1236974">
    <property type="pathway name" value="ER-Phagosome pathway"/>
</dbReference>
<dbReference type="Reactome" id="R-SSC-3000480">
    <property type="pathway name" value="Scavenging by Class A Receptors"/>
</dbReference>
<dbReference type="Reactome" id="R-SSC-901042">
    <property type="pathway name" value="Calnexin/calreticulin cycle"/>
</dbReference>
<dbReference type="Reactome" id="R-SSC-983170">
    <property type="pathway name" value="Antigen Presentation: Folding, assembly and peptide loading of class I MHC"/>
</dbReference>
<dbReference type="Proteomes" id="UP000008227">
    <property type="component" value="Chromosome 2"/>
</dbReference>
<dbReference type="Proteomes" id="UP000314985">
    <property type="component" value="Chromosome 2"/>
</dbReference>
<dbReference type="Proteomes" id="UP000694570">
    <property type="component" value="Unplaced"/>
</dbReference>
<dbReference type="Proteomes" id="UP000694571">
    <property type="component" value="Unplaced"/>
</dbReference>
<dbReference type="Proteomes" id="UP000694720">
    <property type="component" value="Unplaced"/>
</dbReference>
<dbReference type="Proteomes" id="UP000694722">
    <property type="component" value="Unplaced"/>
</dbReference>
<dbReference type="Proteomes" id="UP000694723">
    <property type="component" value="Unplaced"/>
</dbReference>
<dbReference type="Proteomes" id="UP000694724">
    <property type="component" value="Unplaced"/>
</dbReference>
<dbReference type="Proteomes" id="UP000694725">
    <property type="component" value="Unplaced"/>
</dbReference>
<dbReference type="Proteomes" id="UP000694726">
    <property type="component" value="Unplaced"/>
</dbReference>
<dbReference type="Proteomes" id="UP000694727">
    <property type="component" value="Unplaced"/>
</dbReference>
<dbReference type="Proteomes" id="UP000694728">
    <property type="component" value="Unplaced"/>
</dbReference>
<dbReference type="Bgee" id="ENSSSCG00000013746">
    <property type="expression patterns" value="Expressed in granulosa cell and 43 other cell types or tissues"/>
</dbReference>
<dbReference type="ExpressionAtlas" id="P28491">
    <property type="expression patterns" value="baseline and differential"/>
</dbReference>
<dbReference type="GO" id="GO:0060473">
    <property type="term" value="C:cortical granule"/>
    <property type="evidence" value="ECO:0000250"/>
    <property type="project" value="UniProtKB"/>
</dbReference>
<dbReference type="GO" id="GO:0044194">
    <property type="term" value="C:cytolytic granule"/>
    <property type="evidence" value="ECO:0007669"/>
    <property type="project" value="UniProtKB-SubCell"/>
</dbReference>
<dbReference type="GO" id="GO:0005829">
    <property type="term" value="C:cytosol"/>
    <property type="evidence" value="ECO:0007669"/>
    <property type="project" value="UniProtKB-SubCell"/>
</dbReference>
<dbReference type="GO" id="GO:0005789">
    <property type="term" value="C:endoplasmic reticulum membrane"/>
    <property type="evidence" value="ECO:0000318"/>
    <property type="project" value="GO_Central"/>
</dbReference>
<dbReference type="GO" id="GO:0044322">
    <property type="term" value="C:endoplasmic reticulum quality control compartment"/>
    <property type="evidence" value="ECO:0007669"/>
    <property type="project" value="Ensembl"/>
</dbReference>
<dbReference type="GO" id="GO:0009897">
    <property type="term" value="C:external side of plasma membrane"/>
    <property type="evidence" value="ECO:0007669"/>
    <property type="project" value="Ensembl"/>
</dbReference>
<dbReference type="GO" id="GO:0005615">
    <property type="term" value="C:extracellular space"/>
    <property type="evidence" value="ECO:0007669"/>
    <property type="project" value="Ensembl"/>
</dbReference>
<dbReference type="GO" id="GO:0042824">
    <property type="term" value="C:MHC class I peptide loading complex"/>
    <property type="evidence" value="ECO:0007669"/>
    <property type="project" value="Ensembl"/>
</dbReference>
<dbReference type="GO" id="GO:0005635">
    <property type="term" value="C:nuclear envelope"/>
    <property type="evidence" value="ECO:0007669"/>
    <property type="project" value="Ensembl"/>
</dbReference>
<dbReference type="GO" id="GO:0048471">
    <property type="term" value="C:perinuclear region of cytoplasm"/>
    <property type="evidence" value="ECO:0007669"/>
    <property type="project" value="Ensembl"/>
</dbReference>
<dbReference type="GO" id="GO:0005840">
    <property type="term" value="C:ribosome"/>
    <property type="evidence" value="ECO:0007669"/>
    <property type="project" value="Ensembl"/>
</dbReference>
<dbReference type="GO" id="GO:0033018">
    <property type="term" value="C:sarcoplasmic reticulum lumen"/>
    <property type="evidence" value="ECO:0007669"/>
    <property type="project" value="UniProtKB-SubCell"/>
</dbReference>
<dbReference type="GO" id="GO:0005509">
    <property type="term" value="F:calcium ion binding"/>
    <property type="evidence" value="ECO:0000250"/>
    <property type="project" value="UniProtKB"/>
</dbReference>
<dbReference type="GO" id="GO:0030246">
    <property type="term" value="F:carbohydrate binding"/>
    <property type="evidence" value="ECO:0007669"/>
    <property type="project" value="UniProtKB-KW"/>
</dbReference>
<dbReference type="GO" id="GO:0001849">
    <property type="term" value="F:complement component C1q complex binding"/>
    <property type="evidence" value="ECO:0007669"/>
    <property type="project" value="Ensembl"/>
</dbReference>
<dbReference type="GO" id="GO:0005178">
    <property type="term" value="F:integrin binding"/>
    <property type="evidence" value="ECO:0007669"/>
    <property type="project" value="Ensembl"/>
</dbReference>
<dbReference type="GO" id="GO:0140313">
    <property type="term" value="F:molecular sequestering activity"/>
    <property type="evidence" value="ECO:0007669"/>
    <property type="project" value="Ensembl"/>
</dbReference>
<dbReference type="GO" id="GO:0003729">
    <property type="term" value="F:mRNA binding"/>
    <property type="evidence" value="ECO:0007669"/>
    <property type="project" value="Ensembl"/>
</dbReference>
<dbReference type="GO" id="GO:0050681">
    <property type="term" value="F:nuclear androgen receptor binding"/>
    <property type="evidence" value="ECO:0007669"/>
    <property type="project" value="Ensembl"/>
</dbReference>
<dbReference type="GO" id="GO:0005049">
    <property type="term" value="F:nuclear export signal receptor activity"/>
    <property type="evidence" value="ECO:0007669"/>
    <property type="project" value="Ensembl"/>
</dbReference>
<dbReference type="GO" id="GO:0044183">
    <property type="term" value="F:protein folding chaperone"/>
    <property type="evidence" value="ECO:0007669"/>
    <property type="project" value="Ensembl"/>
</dbReference>
<dbReference type="GO" id="GO:0031625">
    <property type="term" value="F:ubiquitin protein ligase binding"/>
    <property type="evidence" value="ECO:0007669"/>
    <property type="project" value="Ensembl"/>
</dbReference>
<dbReference type="GO" id="GO:0051082">
    <property type="term" value="F:unfolded protein binding"/>
    <property type="evidence" value="ECO:0007669"/>
    <property type="project" value="InterPro"/>
</dbReference>
<dbReference type="GO" id="GO:0090398">
    <property type="term" value="P:cellular senescence"/>
    <property type="evidence" value="ECO:0007669"/>
    <property type="project" value="Ensembl"/>
</dbReference>
<dbReference type="GO" id="GO:0030866">
    <property type="term" value="P:cortical actin cytoskeleton organization"/>
    <property type="evidence" value="ECO:0007669"/>
    <property type="project" value="Ensembl"/>
</dbReference>
<dbReference type="GO" id="GO:0036503">
    <property type="term" value="P:ERAD pathway"/>
    <property type="evidence" value="ECO:0000318"/>
    <property type="project" value="GO_Central"/>
</dbReference>
<dbReference type="GO" id="GO:0033144">
    <property type="term" value="P:negative regulation of intracellular steroid hormone receptor signaling pathway"/>
    <property type="evidence" value="ECO:0007669"/>
    <property type="project" value="Ensembl"/>
</dbReference>
<dbReference type="GO" id="GO:0045665">
    <property type="term" value="P:negative regulation of neuron differentiation"/>
    <property type="evidence" value="ECO:0007669"/>
    <property type="project" value="Ensembl"/>
</dbReference>
<dbReference type="GO" id="GO:0048387">
    <property type="term" value="P:negative regulation of retinoic acid receptor signaling pathway"/>
    <property type="evidence" value="ECO:0007669"/>
    <property type="project" value="Ensembl"/>
</dbReference>
<dbReference type="GO" id="GO:0000122">
    <property type="term" value="P:negative regulation of transcription by RNA polymerase II"/>
    <property type="evidence" value="ECO:0007669"/>
    <property type="project" value="Ensembl"/>
</dbReference>
<dbReference type="GO" id="GO:0017148">
    <property type="term" value="P:negative regulation of translation"/>
    <property type="evidence" value="ECO:0007669"/>
    <property type="project" value="Ensembl"/>
</dbReference>
<dbReference type="GO" id="GO:1901164">
    <property type="term" value="P:negative regulation of trophoblast cell migration"/>
    <property type="evidence" value="ECO:0007669"/>
    <property type="project" value="Ensembl"/>
</dbReference>
<dbReference type="GO" id="GO:0002502">
    <property type="term" value="P:peptide antigen assembly with MHC class I protein complex"/>
    <property type="evidence" value="ECO:0007669"/>
    <property type="project" value="Ensembl"/>
</dbReference>
<dbReference type="GO" id="GO:0045787">
    <property type="term" value="P:positive regulation of cell cycle"/>
    <property type="evidence" value="ECO:0007669"/>
    <property type="project" value="Ensembl"/>
</dbReference>
<dbReference type="GO" id="GO:0008284">
    <property type="term" value="P:positive regulation of cell population proliferation"/>
    <property type="evidence" value="ECO:0007669"/>
    <property type="project" value="Ensembl"/>
</dbReference>
<dbReference type="GO" id="GO:2000510">
    <property type="term" value="P:positive regulation of dendritic cell chemotaxis"/>
    <property type="evidence" value="ECO:0007669"/>
    <property type="project" value="Ensembl"/>
</dbReference>
<dbReference type="GO" id="GO:0010595">
    <property type="term" value="P:positive regulation of endothelial cell migration"/>
    <property type="evidence" value="ECO:0007669"/>
    <property type="project" value="Ensembl"/>
</dbReference>
<dbReference type="GO" id="GO:0010628">
    <property type="term" value="P:positive regulation of gene expression"/>
    <property type="evidence" value="ECO:0007669"/>
    <property type="project" value="Ensembl"/>
</dbReference>
<dbReference type="GO" id="GO:1901224">
    <property type="term" value="P:positive regulation of non-canonical NF-kappaB signal transduction"/>
    <property type="evidence" value="ECO:0007669"/>
    <property type="project" value="Ensembl"/>
</dbReference>
<dbReference type="GO" id="GO:0050766">
    <property type="term" value="P:positive regulation of phagocytosis"/>
    <property type="evidence" value="ECO:0007669"/>
    <property type="project" value="Ensembl"/>
</dbReference>
<dbReference type="GO" id="GO:1900026">
    <property type="term" value="P:positive regulation of substrate adhesion-dependent cell spreading"/>
    <property type="evidence" value="ECO:0007669"/>
    <property type="project" value="Ensembl"/>
</dbReference>
<dbReference type="GO" id="GO:0006611">
    <property type="term" value="P:protein export from nucleus"/>
    <property type="evidence" value="ECO:0007669"/>
    <property type="project" value="Ensembl"/>
</dbReference>
<dbReference type="GO" id="GO:0006457">
    <property type="term" value="P:protein folding"/>
    <property type="evidence" value="ECO:0000318"/>
    <property type="project" value="GO_Central"/>
</dbReference>
<dbReference type="GO" id="GO:0034504">
    <property type="term" value="P:protein localization to nucleus"/>
    <property type="evidence" value="ECO:0007669"/>
    <property type="project" value="Ensembl"/>
</dbReference>
<dbReference type="GO" id="GO:0050821">
    <property type="term" value="P:protein stabilization"/>
    <property type="evidence" value="ECO:0000250"/>
    <property type="project" value="UniProtKB"/>
</dbReference>
<dbReference type="GO" id="GO:0040020">
    <property type="term" value="P:regulation of meiotic nuclear division"/>
    <property type="evidence" value="ECO:0007669"/>
    <property type="project" value="Ensembl"/>
</dbReference>
<dbReference type="FunFam" id="2.10.250.10:FF:000002">
    <property type="entry name" value="Calreticulin"/>
    <property type="match status" value="1"/>
</dbReference>
<dbReference type="FunFam" id="2.60.120.200:FF:000113">
    <property type="entry name" value="Calreticulin 3"/>
    <property type="match status" value="1"/>
</dbReference>
<dbReference type="FunFam" id="2.60.120.200:FF:000122">
    <property type="entry name" value="Calreticulin 3"/>
    <property type="match status" value="1"/>
</dbReference>
<dbReference type="Gene3D" id="2.60.120.200">
    <property type="match status" value="1"/>
</dbReference>
<dbReference type="Gene3D" id="2.10.250.10">
    <property type="entry name" value="Calreticulin/calnexin, P domain"/>
    <property type="match status" value="1"/>
</dbReference>
<dbReference type="InterPro" id="IPR001580">
    <property type="entry name" value="Calret/calnex"/>
</dbReference>
<dbReference type="InterPro" id="IPR018124">
    <property type="entry name" value="Calret/calnex_CS"/>
</dbReference>
<dbReference type="InterPro" id="IPR009169">
    <property type="entry name" value="Calreticulin"/>
</dbReference>
<dbReference type="InterPro" id="IPR009033">
    <property type="entry name" value="Calreticulin/calnexin_P_dom_sf"/>
</dbReference>
<dbReference type="InterPro" id="IPR013320">
    <property type="entry name" value="ConA-like_dom_sf"/>
</dbReference>
<dbReference type="PANTHER" id="PTHR11073:SF16">
    <property type="entry name" value="CALRETICULIN"/>
    <property type="match status" value="1"/>
</dbReference>
<dbReference type="PANTHER" id="PTHR11073">
    <property type="entry name" value="CALRETICULIN AND CALNEXIN"/>
    <property type="match status" value="1"/>
</dbReference>
<dbReference type="Pfam" id="PF00262">
    <property type="entry name" value="Calreticulin"/>
    <property type="match status" value="2"/>
</dbReference>
<dbReference type="PIRSF" id="PIRSF002356">
    <property type="entry name" value="Calreticulin"/>
    <property type="match status" value="1"/>
</dbReference>
<dbReference type="PRINTS" id="PR00626">
    <property type="entry name" value="CALRETICULIN"/>
</dbReference>
<dbReference type="SUPFAM" id="SSF49899">
    <property type="entry name" value="Concanavalin A-like lectins/glucanases"/>
    <property type="match status" value="1"/>
</dbReference>
<dbReference type="SUPFAM" id="SSF63887">
    <property type="entry name" value="P-domain of calnexin/calreticulin"/>
    <property type="match status" value="1"/>
</dbReference>
<dbReference type="PROSITE" id="PS00803">
    <property type="entry name" value="CALRETICULIN_1"/>
    <property type="match status" value="1"/>
</dbReference>
<dbReference type="PROSITE" id="PS00804">
    <property type="entry name" value="CALRETICULIN_2"/>
    <property type="match status" value="1"/>
</dbReference>
<dbReference type="PROSITE" id="PS00805">
    <property type="entry name" value="CALRETICULIN_REPEAT"/>
    <property type="match status" value="3"/>
</dbReference>
<dbReference type="PROSITE" id="PS00014">
    <property type="entry name" value="ER_TARGET"/>
    <property type="match status" value="1"/>
</dbReference>
<comment type="function">
    <text evidence="4 5 9">Calcium-binding chaperone that promotes folding, oligomeric assembly and quality control in the endoplasmic reticulum (ER) via the calreticulin/calnexin cycle. This lectin interacts transiently with almost all of the monoglucosylated glycoproteins that are synthesized in the ER. Interacts with the DNA-binding domain of NR3C1 and mediates its nuclear export (By similarity). Involved in maternal gene expression regulation. May participate in oocyte maturation via the regulation of calcium homeostasis (PubMed:20222029). Present in the cortical granules of non-activated oocytes, is exocytosed during the cortical reaction in response to oocyte activation and might participate in the block to polyspermy (By similarity).</text>
</comment>
<comment type="subunit">
    <text evidence="2 3 4">Monomer. Component of an EIF2 complex at least composed of CELF1/CUGBP1, CALR, CALR3, EIF2S1, EIF2S2, HSP90B1 and HSPA5. Interacts with PDIA3/ERp57 and SPACA9 (By similarity). Interacts with TRIM21. Interacts with NR3C1. Interacts with PPIB. Interacts (via P-domain) with PDIA5. Interacts with CLCC1 (By similarity).</text>
</comment>
<comment type="subcellular location">
    <subcellularLocation>
        <location evidence="8">Endoplasmic reticulum lumen</location>
    </subcellularLocation>
    <subcellularLocation>
        <location evidence="9">Cytoplasm</location>
        <location evidence="9">Cytosol</location>
    </subcellularLocation>
    <subcellularLocation>
        <location evidence="4">Secreted</location>
        <location evidence="4">Extracellular space</location>
        <location evidence="4">Extracellular matrix</location>
    </subcellularLocation>
    <subcellularLocation>
        <location evidence="4">Cell surface</location>
    </subcellularLocation>
    <subcellularLocation>
        <location evidence="8">Sarcoplasmic reticulum lumen</location>
    </subcellularLocation>
    <subcellularLocation>
        <location evidence="11">Cytoplasmic vesicle</location>
        <location evidence="11">Secretory vesicle</location>
        <location evidence="11">Cortical granule</location>
    </subcellularLocation>
    <subcellularLocation>
        <location evidence="4">Cytolytic granule</location>
    </subcellularLocation>
    <text evidence="4 5 9">Also found in cell surface (T cells), cytosol and extracellular matrix. During oocyte maturation and after parthenogenetic activation accumulates in cortical granules. In pronuclear and early cleaved embryos localizes weakly to cytoplasm around nucleus and more strongly in the region near the cortex (PubMed:20222029). In cortical granules of non-activated oocytes, is exocytosed during the cortical reaction in response to oocyte activation (By similarity).</text>
</comment>
<comment type="tissue specificity">
    <text evidence="9">In blastocyst expressed in all blastomeres (at protein level). In embryos, expressed in spleen, kidney, liver, fat, muscle, ovary, granulosa cells and cumulus cells.</text>
</comment>
<comment type="developmental stage">
    <text evidence="9">Expressed in immature GV-stage oocytes, mature MII-stage oocytes, parthenogenetically activated MII-stage oocytes and in pronuclear embryos (at protein level). During in vitro oocyte maturation, expression initially increases after 12 hours of culture, followed by a strong decline at 30 hours (MI stage) and 44 hours (MII stage). Expression remains constant in MII-stage oocytes after parthenogenetic activation, increasing in two- and four-cell parthenotes. Not detected in blastocyst stage embryos.</text>
</comment>
<comment type="domain">
    <text evidence="1">Can be divided into a N-terminal globular domain, a proline-rich P-domain forming an elongated arm-like structure and a C-terminal acidic domain. The P-domain binds one molecule of calcium with high affinity, whereas the acidic C-domain binds multiple calcium ions with low affinity (By similarity).</text>
</comment>
<comment type="domain">
    <text evidence="1">The interaction with glycans occurs through a binding site in the globular lectin domain.</text>
</comment>
<comment type="domain">
    <text evidence="1">The zinc binding sites are localized to the N-domain.</text>
</comment>
<comment type="similarity">
    <text evidence="10">Belongs to the calreticulin family.</text>
</comment>
<evidence type="ECO:0000250" key="1"/>
<evidence type="ECO:0000250" key="2">
    <source>
        <dbReference type="UniProtKB" id="P14211"/>
    </source>
</evidence>
<evidence type="ECO:0000250" key="3">
    <source>
        <dbReference type="UniProtKB" id="P18418"/>
    </source>
</evidence>
<evidence type="ECO:0000250" key="4">
    <source>
        <dbReference type="UniProtKB" id="P27797"/>
    </source>
</evidence>
<evidence type="ECO:0000250" key="5">
    <source>
        <dbReference type="UniProtKB" id="Q8K3H7"/>
    </source>
</evidence>
<evidence type="ECO:0000255" key="6">
    <source>
        <dbReference type="PROSITE-ProRule" id="PRU10138"/>
    </source>
</evidence>
<evidence type="ECO:0000256" key="7">
    <source>
        <dbReference type="SAM" id="MobiDB-lite"/>
    </source>
</evidence>
<evidence type="ECO:0000269" key="8">
    <source>
    </source>
</evidence>
<evidence type="ECO:0000269" key="9">
    <source>
    </source>
</evidence>
<evidence type="ECO:0000305" key="10"/>
<evidence type="ECO:0000305" key="11">
    <source>
    </source>
</evidence>
<gene>
    <name type="primary">CALR</name>
</gene>
<name>CALR_PIG</name>
<protein>
    <recommendedName>
        <fullName>Calreticulin</fullName>
    </recommendedName>
    <alternativeName>
        <fullName>CRP55</fullName>
    </alternativeName>
    <alternativeName>
        <fullName>Calregulin</fullName>
    </alternativeName>
    <alternativeName>
        <fullName>Endoplasmic reticulum resident protein 60</fullName>
        <shortName>ERp60</shortName>
    </alternativeName>
    <alternativeName>
        <fullName>HACBP</fullName>
    </alternativeName>
</protein>
<accession>P28491</accession>
<accession>D4N5N1</accession>
<sequence length="417" mass="48288">MLLPVPLLLGLVGLAAAEPTIYFKEQFLDGDGWTDRWIESKHKPDFGRFVLSSGKFYGDQEKDKGLQTSQDARFYALSARFEPFSNKGQTLVVQFTVKHEQNIDCGGGYVKLFPDGLDQTDMHGDSEYNIMFGPDICGPGTKKVHVIFNYKGKNVLINKDIRCKDDEFTHLYTLIVRPDNTYEVKIDNSQVESGSLEDDWDFLPPKKIKDPDAVKPEDWDERAKIDDPTDSKPEDWDKPEHIPDPDAKKPEDWDEEMDGEWEPPVIQNPEYKGEWKPRQIDNPDYKGTWIHPEIDNPEYSPDSNIYAYENFAVLGLDLWQVKSGTIFDNFLITNDEAYAEEFGNETWGVTKAAEKQMKDKQDEEQRLKEEEEEKKRKEEEEVDKEDEEDKDEDEEEEDEKEEEEEEDAAAGQAKDEL</sequence>
<keyword id="KW-0007">Acetylation</keyword>
<keyword id="KW-0106">Calcium</keyword>
<keyword id="KW-0143">Chaperone</keyword>
<keyword id="KW-0963">Cytoplasm</keyword>
<keyword id="KW-0968">Cytoplasmic vesicle</keyword>
<keyword id="KW-0903">Direct protein sequencing</keyword>
<keyword id="KW-1015">Disulfide bond</keyword>
<keyword id="KW-0256">Endoplasmic reticulum</keyword>
<keyword id="KW-0272">Extracellular matrix</keyword>
<keyword id="KW-0379">Hydroxylation</keyword>
<keyword id="KW-0430">Lectin</keyword>
<keyword id="KW-0458">Lysosome</keyword>
<keyword id="KW-0479">Metal-binding</keyword>
<keyword id="KW-1185">Reference proteome</keyword>
<keyword id="KW-0677">Repeat</keyword>
<keyword id="KW-0703">Sarcoplasmic reticulum</keyword>
<keyword id="KW-0964">Secreted</keyword>
<keyword id="KW-0732">Signal</keyword>
<keyword id="KW-0862">Zinc</keyword>
<proteinExistence type="evidence at protein level"/>